<keyword id="KW-0963">Cytoplasm</keyword>
<keyword id="KW-0396">Initiation factor</keyword>
<keyword id="KW-0648">Protein biosynthesis</keyword>
<keyword id="KW-0694">RNA-binding</keyword>
<keyword id="KW-0699">rRNA-binding</keyword>
<accession>B0RT36</accession>
<gene>
    <name evidence="1" type="primary">infA</name>
    <name type="ordered locus">xcc-b100_2267</name>
</gene>
<protein>
    <recommendedName>
        <fullName evidence="1">Translation initiation factor IF-1</fullName>
    </recommendedName>
</protein>
<dbReference type="EMBL" id="AM920689">
    <property type="protein sequence ID" value="CAP51622.1"/>
    <property type="molecule type" value="Genomic_DNA"/>
</dbReference>
<dbReference type="SMR" id="B0RT36"/>
<dbReference type="KEGG" id="xca:xcc-b100_2267"/>
<dbReference type="HOGENOM" id="CLU_151267_1_0_6"/>
<dbReference type="Proteomes" id="UP000001188">
    <property type="component" value="Chromosome"/>
</dbReference>
<dbReference type="GO" id="GO:0005829">
    <property type="term" value="C:cytosol"/>
    <property type="evidence" value="ECO:0007669"/>
    <property type="project" value="TreeGrafter"/>
</dbReference>
<dbReference type="GO" id="GO:0043022">
    <property type="term" value="F:ribosome binding"/>
    <property type="evidence" value="ECO:0007669"/>
    <property type="project" value="UniProtKB-UniRule"/>
</dbReference>
<dbReference type="GO" id="GO:0019843">
    <property type="term" value="F:rRNA binding"/>
    <property type="evidence" value="ECO:0007669"/>
    <property type="project" value="UniProtKB-UniRule"/>
</dbReference>
<dbReference type="GO" id="GO:0003743">
    <property type="term" value="F:translation initiation factor activity"/>
    <property type="evidence" value="ECO:0007669"/>
    <property type="project" value="UniProtKB-UniRule"/>
</dbReference>
<dbReference type="CDD" id="cd04451">
    <property type="entry name" value="S1_IF1"/>
    <property type="match status" value="1"/>
</dbReference>
<dbReference type="FunFam" id="2.40.50.140:FF:000002">
    <property type="entry name" value="Translation initiation factor IF-1"/>
    <property type="match status" value="1"/>
</dbReference>
<dbReference type="Gene3D" id="2.40.50.140">
    <property type="entry name" value="Nucleic acid-binding proteins"/>
    <property type="match status" value="1"/>
</dbReference>
<dbReference type="HAMAP" id="MF_00075">
    <property type="entry name" value="IF_1"/>
    <property type="match status" value="1"/>
</dbReference>
<dbReference type="InterPro" id="IPR012340">
    <property type="entry name" value="NA-bd_OB-fold"/>
</dbReference>
<dbReference type="InterPro" id="IPR006196">
    <property type="entry name" value="RNA-binding_domain_S1_IF1"/>
</dbReference>
<dbReference type="InterPro" id="IPR003029">
    <property type="entry name" value="S1_domain"/>
</dbReference>
<dbReference type="InterPro" id="IPR004368">
    <property type="entry name" value="TIF_IF1"/>
</dbReference>
<dbReference type="NCBIfam" id="TIGR00008">
    <property type="entry name" value="infA"/>
    <property type="match status" value="1"/>
</dbReference>
<dbReference type="PANTHER" id="PTHR33370">
    <property type="entry name" value="TRANSLATION INITIATION FACTOR IF-1, CHLOROPLASTIC"/>
    <property type="match status" value="1"/>
</dbReference>
<dbReference type="PANTHER" id="PTHR33370:SF1">
    <property type="entry name" value="TRANSLATION INITIATION FACTOR IF-1, CHLOROPLASTIC"/>
    <property type="match status" value="1"/>
</dbReference>
<dbReference type="Pfam" id="PF01176">
    <property type="entry name" value="eIF-1a"/>
    <property type="match status" value="1"/>
</dbReference>
<dbReference type="SMART" id="SM00316">
    <property type="entry name" value="S1"/>
    <property type="match status" value="1"/>
</dbReference>
<dbReference type="SUPFAM" id="SSF50249">
    <property type="entry name" value="Nucleic acid-binding proteins"/>
    <property type="match status" value="1"/>
</dbReference>
<dbReference type="PROSITE" id="PS50832">
    <property type="entry name" value="S1_IF1_TYPE"/>
    <property type="match status" value="1"/>
</dbReference>
<sequence>MSNDDSIEFEGSVSETLPNTTFRVKLENGYEIIAHISGRMRKNYIRILTGDRVKVEMTPYDLTKGRITYRMK</sequence>
<feature type="chain" id="PRO_0000338950" description="Translation initiation factor IF-1">
    <location>
        <begin position="1"/>
        <end position="72"/>
    </location>
</feature>
<feature type="domain" description="S1-like" evidence="1">
    <location>
        <begin position="1"/>
        <end position="72"/>
    </location>
</feature>
<evidence type="ECO:0000255" key="1">
    <source>
        <dbReference type="HAMAP-Rule" id="MF_00075"/>
    </source>
</evidence>
<name>IF1_XANCB</name>
<proteinExistence type="inferred from homology"/>
<reference key="1">
    <citation type="journal article" date="2008" name="J. Biotechnol.">
        <title>The genome of Xanthomonas campestris pv. campestris B100 and its use for the reconstruction of metabolic pathways involved in xanthan biosynthesis.</title>
        <authorList>
            <person name="Vorhoelter F.-J."/>
            <person name="Schneiker S."/>
            <person name="Goesmann A."/>
            <person name="Krause L."/>
            <person name="Bekel T."/>
            <person name="Kaiser O."/>
            <person name="Linke B."/>
            <person name="Patschkowski T."/>
            <person name="Rueckert C."/>
            <person name="Schmid J."/>
            <person name="Sidhu V.K."/>
            <person name="Sieber V."/>
            <person name="Tauch A."/>
            <person name="Watt S.A."/>
            <person name="Weisshaar B."/>
            <person name="Becker A."/>
            <person name="Niehaus K."/>
            <person name="Puehler A."/>
        </authorList>
    </citation>
    <scope>NUCLEOTIDE SEQUENCE [LARGE SCALE GENOMIC DNA]</scope>
    <source>
        <strain>B100</strain>
    </source>
</reference>
<organism>
    <name type="scientific">Xanthomonas campestris pv. campestris (strain B100)</name>
    <dbReference type="NCBI Taxonomy" id="509169"/>
    <lineage>
        <taxon>Bacteria</taxon>
        <taxon>Pseudomonadati</taxon>
        <taxon>Pseudomonadota</taxon>
        <taxon>Gammaproteobacteria</taxon>
        <taxon>Lysobacterales</taxon>
        <taxon>Lysobacteraceae</taxon>
        <taxon>Xanthomonas</taxon>
    </lineage>
</organism>
<comment type="function">
    <text evidence="1">One of the essential components for the initiation of protein synthesis. Stabilizes the binding of IF-2 and IF-3 on the 30S subunit to which N-formylmethionyl-tRNA(fMet) subsequently binds. Helps modulate mRNA selection, yielding the 30S pre-initiation complex (PIC). Upon addition of the 50S ribosomal subunit IF-1, IF-2 and IF-3 are released leaving the mature 70S translation initiation complex.</text>
</comment>
<comment type="subunit">
    <text evidence="1">Component of the 30S ribosomal translation pre-initiation complex which assembles on the 30S ribosome in the order IF-2 and IF-3, IF-1 and N-formylmethionyl-tRNA(fMet); mRNA recruitment can occur at any time during PIC assembly.</text>
</comment>
<comment type="subcellular location">
    <subcellularLocation>
        <location evidence="1">Cytoplasm</location>
    </subcellularLocation>
</comment>
<comment type="similarity">
    <text evidence="1">Belongs to the IF-1 family.</text>
</comment>